<comment type="function">
    <text evidence="1">Catalyzes the ATP- as well as the pyrophosphate-dependent phosphorylation of a specific serine residue in HPr, a phosphocarrier protein of the phosphoenolpyruvate-dependent sugar phosphotransferase system (PTS). HprK/P also catalyzes the pyrophosphate-producing, inorganic phosphate-dependent dephosphorylation (phosphorolysis) of seryl-phosphorylated HPr (P-Ser-HPr). The two antagonistic activities of HprK/P are regulated by several intracellular metabolites, which change their concentration in response to the absence or presence of rapidly metabolisable carbon sources (glucose, fructose, etc.) in the growth medium. Therefore, by controlling the phosphorylation state of HPr, HPrK/P is a sensor enzyme that plays a major role in the regulation of carbon metabolism and sugar transport: it mediates carbon catabolite repression (CCR), and regulates PTS-catalyzed carbohydrate uptake and inducer exclusion.</text>
</comment>
<comment type="catalytic activity">
    <reaction evidence="1">
        <text>[HPr protein]-L-serine + ATP = [HPr protein]-O-phospho-L-serine + ADP + H(+)</text>
        <dbReference type="Rhea" id="RHEA:46600"/>
        <dbReference type="Rhea" id="RHEA-COMP:11602"/>
        <dbReference type="Rhea" id="RHEA-COMP:11603"/>
        <dbReference type="ChEBI" id="CHEBI:15378"/>
        <dbReference type="ChEBI" id="CHEBI:29999"/>
        <dbReference type="ChEBI" id="CHEBI:30616"/>
        <dbReference type="ChEBI" id="CHEBI:83421"/>
        <dbReference type="ChEBI" id="CHEBI:456216"/>
    </reaction>
</comment>
<comment type="catalytic activity">
    <reaction evidence="1">
        <text>[HPr protein]-O-phospho-L-serine + phosphate + H(+) = [HPr protein]-L-serine + diphosphate</text>
        <dbReference type="Rhea" id="RHEA:46604"/>
        <dbReference type="Rhea" id="RHEA-COMP:11602"/>
        <dbReference type="Rhea" id="RHEA-COMP:11603"/>
        <dbReference type="ChEBI" id="CHEBI:15378"/>
        <dbReference type="ChEBI" id="CHEBI:29999"/>
        <dbReference type="ChEBI" id="CHEBI:33019"/>
        <dbReference type="ChEBI" id="CHEBI:43474"/>
        <dbReference type="ChEBI" id="CHEBI:83421"/>
    </reaction>
</comment>
<comment type="cofactor">
    <cofactor evidence="1">
        <name>Mg(2+)</name>
        <dbReference type="ChEBI" id="CHEBI:18420"/>
    </cofactor>
</comment>
<comment type="subunit">
    <text evidence="1">Homohexamer.</text>
</comment>
<comment type="domain">
    <text evidence="1">The Walker A ATP-binding motif also binds Pi and PPi.</text>
</comment>
<comment type="miscellaneous">
    <text evidence="1">Both phosphorylation and phosphorolysis are carried out by the same active site and suggest a common mechanism for both reactions.</text>
</comment>
<comment type="similarity">
    <text evidence="1">Belongs to the HPrK/P family.</text>
</comment>
<dbReference type="EC" id="2.7.11.-" evidence="1"/>
<dbReference type="EC" id="2.7.4.-" evidence="1"/>
<dbReference type="EMBL" id="CP000923">
    <property type="protein sequence ID" value="ABY92358.1"/>
    <property type="molecule type" value="Genomic_DNA"/>
</dbReference>
<dbReference type="RefSeq" id="WP_009052761.1">
    <property type="nucleotide sequence ID" value="NC_010320.1"/>
</dbReference>
<dbReference type="SMR" id="B0K682"/>
<dbReference type="KEGG" id="tex:Teth514_1059"/>
<dbReference type="HOGENOM" id="CLU_052030_0_1_9"/>
<dbReference type="Proteomes" id="UP000002155">
    <property type="component" value="Chromosome"/>
</dbReference>
<dbReference type="GO" id="GO:0005524">
    <property type="term" value="F:ATP binding"/>
    <property type="evidence" value="ECO:0007669"/>
    <property type="project" value="UniProtKB-UniRule"/>
</dbReference>
<dbReference type="GO" id="GO:0000287">
    <property type="term" value="F:magnesium ion binding"/>
    <property type="evidence" value="ECO:0007669"/>
    <property type="project" value="UniProtKB-UniRule"/>
</dbReference>
<dbReference type="GO" id="GO:0000155">
    <property type="term" value="F:phosphorelay sensor kinase activity"/>
    <property type="evidence" value="ECO:0007669"/>
    <property type="project" value="InterPro"/>
</dbReference>
<dbReference type="GO" id="GO:0004674">
    <property type="term" value="F:protein serine/threonine kinase activity"/>
    <property type="evidence" value="ECO:0007669"/>
    <property type="project" value="UniProtKB-KW"/>
</dbReference>
<dbReference type="GO" id="GO:0004712">
    <property type="term" value="F:protein serine/threonine/tyrosine kinase activity"/>
    <property type="evidence" value="ECO:0007669"/>
    <property type="project" value="UniProtKB-UniRule"/>
</dbReference>
<dbReference type="GO" id="GO:0006109">
    <property type="term" value="P:regulation of carbohydrate metabolic process"/>
    <property type="evidence" value="ECO:0007669"/>
    <property type="project" value="UniProtKB-UniRule"/>
</dbReference>
<dbReference type="CDD" id="cd01918">
    <property type="entry name" value="HprK_C"/>
    <property type="match status" value="1"/>
</dbReference>
<dbReference type="FunFam" id="3.40.50.300:FF:000174">
    <property type="entry name" value="HPr kinase/phosphorylase"/>
    <property type="match status" value="1"/>
</dbReference>
<dbReference type="Gene3D" id="3.40.1390.20">
    <property type="entry name" value="HprK N-terminal domain-like"/>
    <property type="match status" value="1"/>
</dbReference>
<dbReference type="Gene3D" id="3.40.50.300">
    <property type="entry name" value="P-loop containing nucleotide triphosphate hydrolases"/>
    <property type="match status" value="1"/>
</dbReference>
<dbReference type="HAMAP" id="MF_01249">
    <property type="entry name" value="HPr_kinase"/>
    <property type="match status" value="1"/>
</dbReference>
<dbReference type="InterPro" id="IPR003755">
    <property type="entry name" value="HPr(Ser)_kin/Pase"/>
</dbReference>
<dbReference type="InterPro" id="IPR011104">
    <property type="entry name" value="Hpr_kin/Pase_C"/>
</dbReference>
<dbReference type="InterPro" id="IPR011126">
    <property type="entry name" value="Hpr_kin/Pase_Hpr_N"/>
</dbReference>
<dbReference type="InterPro" id="IPR027417">
    <property type="entry name" value="P-loop_NTPase"/>
</dbReference>
<dbReference type="InterPro" id="IPR028979">
    <property type="entry name" value="Ser_kin/Pase_Hpr-like_N_sf"/>
</dbReference>
<dbReference type="NCBIfam" id="TIGR00679">
    <property type="entry name" value="hpr-ser"/>
    <property type="match status" value="1"/>
</dbReference>
<dbReference type="PANTHER" id="PTHR30305:SF1">
    <property type="entry name" value="HPR KINASE_PHOSPHORYLASE"/>
    <property type="match status" value="1"/>
</dbReference>
<dbReference type="PANTHER" id="PTHR30305">
    <property type="entry name" value="PROTEIN YJDM-RELATED"/>
    <property type="match status" value="1"/>
</dbReference>
<dbReference type="Pfam" id="PF07475">
    <property type="entry name" value="Hpr_kinase_C"/>
    <property type="match status" value="1"/>
</dbReference>
<dbReference type="Pfam" id="PF02603">
    <property type="entry name" value="Hpr_kinase_N"/>
    <property type="match status" value="1"/>
</dbReference>
<dbReference type="SUPFAM" id="SSF75138">
    <property type="entry name" value="HprK N-terminal domain-like"/>
    <property type="match status" value="1"/>
</dbReference>
<dbReference type="SUPFAM" id="SSF53795">
    <property type="entry name" value="PEP carboxykinase-like"/>
    <property type="match status" value="1"/>
</dbReference>
<reference key="1">
    <citation type="submission" date="2008-01" db="EMBL/GenBank/DDBJ databases">
        <title>Complete sequence of Thermoanaerobacter sp. X514.</title>
        <authorList>
            <consortium name="US DOE Joint Genome Institute"/>
            <person name="Copeland A."/>
            <person name="Lucas S."/>
            <person name="Lapidus A."/>
            <person name="Barry K."/>
            <person name="Glavina del Rio T."/>
            <person name="Dalin E."/>
            <person name="Tice H."/>
            <person name="Pitluck S."/>
            <person name="Bruce D."/>
            <person name="Goodwin L."/>
            <person name="Saunders E."/>
            <person name="Brettin T."/>
            <person name="Detter J.C."/>
            <person name="Han C."/>
            <person name="Schmutz J."/>
            <person name="Larimer F."/>
            <person name="Land M."/>
            <person name="Hauser L."/>
            <person name="Kyrpides N."/>
            <person name="Kim E."/>
            <person name="Hemme C."/>
            <person name="Fields M.W."/>
            <person name="He Z."/>
            <person name="Zhou J."/>
            <person name="Richardson P."/>
        </authorList>
    </citation>
    <scope>NUCLEOTIDE SEQUENCE [LARGE SCALE GENOMIC DNA]</scope>
    <source>
        <strain>X514</strain>
    </source>
</reference>
<evidence type="ECO:0000255" key="1">
    <source>
        <dbReference type="HAMAP-Rule" id="MF_01249"/>
    </source>
</evidence>
<accession>B0K682</accession>
<protein>
    <recommendedName>
        <fullName evidence="1">HPr kinase/phosphorylase</fullName>
        <shortName evidence="1">HPrK/P</shortName>
        <ecNumber evidence="1">2.7.11.-</ecNumber>
        <ecNumber evidence="1">2.7.4.-</ecNumber>
    </recommendedName>
    <alternativeName>
        <fullName evidence="1">HPr(Ser) kinase/phosphorylase</fullName>
    </alternativeName>
</protein>
<organism>
    <name type="scientific">Thermoanaerobacter sp. (strain X514)</name>
    <dbReference type="NCBI Taxonomy" id="399726"/>
    <lineage>
        <taxon>Bacteria</taxon>
        <taxon>Bacillati</taxon>
        <taxon>Bacillota</taxon>
        <taxon>Clostridia</taxon>
        <taxon>Thermoanaerobacterales</taxon>
        <taxon>Thermoanaerobacteraceae</taxon>
        <taxon>Thermoanaerobacter</taxon>
    </lineage>
</organism>
<name>HPRK_THEPX</name>
<sequence>MDKIPVETLIKDLNLEVIVEAKNNKIDITTSDVNRPGLQFSGFYEHFAYERVQIIGKVETTFIEQLPDDVLAERADRFFNYPIPCLIVTRDLNIRQEIIDAAQKHDRYLLRTKEASTKFINRLINYLDEKLAPQITIHGDLVDVYGIGVLLLGESGIGKSETALELIKRGHRLVADDAVEISKISEDKLQGSSPEIIRHFIEIRGIGILDIKTLYGVGSVRNSMNIDLVIQLEEWDEDKYYDRLGLEDDYIKFLDVKVPKLTIPVRPGRNLAIIVEVAAMNHRQKQMGYNAAHELNKKLLKQIGN</sequence>
<proteinExistence type="inferred from homology"/>
<keyword id="KW-0067">ATP-binding</keyword>
<keyword id="KW-0119">Carbohydrate metabolism</keyword>
<keyword id="KW-0418">Kinase</keyword>
<keyword id="KW-0460">Magnesium</keyword>
<keyword id="KW-0479">Metal-binding</keyword>
<keyword id="KW-0511">Multifunctional enzyme</keyword>
<keyword id="KW-0547">Nucleotide-binding</keyword>
<keyword id="KW-0723">Serine/threonine-protein kinase</keyword>
<keyword id="KW-0808">Transferase</keyword>
<feature type="chain" id="PRO_1000139916" description="HPr kinase/phosphorylase">
    <location>
        <begin position="1"/>
        <end position="305"/>
    </location>
</feature>
<feature type="region of interest" description="Important for the catalytic mechanism of both phosphorylation and dephosphorylation" evidence="1">
    <location>
        <begin position="201"/>
        <end position="210"/>
    </location>
</feature>
<feature type="region of interest" description="Important for the catalytic mechanism of dephosphorylation" evidence="1">
    <location>
        <begin position="264"/>
        <end position="269"/>
    </location>
</feature>
<feature type="active site" evidence="1">
    <location>
        <position position="138"/>
    </location>
</feature>
<feature type="active site" evidence="1">
    <location>
        <position position="159"/>
    </location>
</feature>
<feature type="active site" description="Proton acceptor; for phosphorylation activity. Proton donor; for dephosphorylation activity" evidence="1">
    <location>
        <position position="177"/>
    </location>
</feature>
<feature type="active site" evidence="1">
    <location>
        <position position="243"/>
    </location>
</feature>
<feature type="binding site" evidence="1">
    <location>
        <begin position="153"/>
        <end position="160"/>
    </location>
    <ligand>
        <name>ATP</name>
        <dbReference type="ChEBI" id="CHEBI:30616"/>
    </ligand>
</feature>
<feature type="binding site" evidence="1">
    <location>
        <position position="160"/>
    </location>
    <ligand>
        <name>Mg(2+)</name>
        <dbReference type="ChEBI" id="CHEBI:18420"/>
    </ligand>
</feature>
<feature type="binding site" evidence="1">
    <location>
        <position position="202"/>
    </location>
    <ligand>
        <name>Mg(2+)</name>
        <dbReference type="ChEBI" id="CHEBI:18420"/>
    </ligand>
</feature>
<gene>
    <name evidence="1" type="primary">hprK</name>
    <name type="ordered locus">Teth514_1059</name>
</gene>